<keyword id="KW-1003">Cell membrane</keyword>
<keyword id="KW-0406">Ion transport</keyword>
<keyword id="KW-0472">Membrane</keyword>
<keyword id="KW-0630">Potassium</keyword>
<keyword id="KW-0633">Potassium transport</keyword>
<keyword id="KW-1185">Reference proteome</keyword>
<keyword id="KW-0812">Transmembrane</keyword>
<keyword id="KW-1133">Transmembrane helix</keyword>
<keyword id="KW-0813">Transport</keyword>
<gene>
    <name evidence="1" type="primary">kdpA</name>
    <name type="ordered locus">MSMEG_5392</name>
    <name type="ordered locus">MSMEI_5244</name>
</gene>
<evidence type="ECO:0000255" key="1">
    <source>
        <dbReference type="HAMAP-Rule" id="MF_00275"/>
    </source>
</evidence>
<reference key="1">
    <citation type="submission" date="2006-10" db="EMBL/GenBank/DDBJ databases">
        <authorList>
            <person name="Fleischmann R.D."/>
            <person name="Dodson R.J."/>
            <person name="Haft D.H."/>
            <person name="Merkel J.S."/>
            <person name="Nelson W.C."/>
            <person name="Fraser C.M."/>
        </authorList>
    </citation>
    <scope>NUCLEOTIDE SEQUENCE [LARGE SCALE GENOMIC DNA]</scope>
    <source>
        <strain>ATCC 700084 / mc(2)155</strain>
    </source>
</reference>
<reference key="2">
    <citation type="journal article" date="2007" name="Genome Biol.">
        <title>Interrupted coding sequences in Mycobacterium smegmatis: authentic mutations or sequencing errors?</title>
        <authorList>
            <person name="Deshayes C."/>
            <person name="Perrodou E."/>
            <person name="Gallien S."/>
            <person name="Euphrasie D."/>
            <person name="Schaeffer C."/>
            <person name="Van-Dorsselaer A."/>
            <person name="Poch O."/>
            <person name="Lecompte O."/>
            <person name="Reyrat J.-M."/>
        </authorList>
    </citation>
    <scope>NUCLEOTIDE SEQUENCE [LARGE SCALE GENOMIC DNA]</scope>
    <source>
        <strain>ATCC 700084 / mc(2)155</strain>
    </source>
</reference>
<reference key="3">
    <citation type="journal article" date="2009" name="Genome Res.">
        <title>Ortho-proteogenomics: multiple proteomes investigation through orthology and a new MS-based protocol.</title>
        <authorList>
            <person name="Gallien S."/>
            <person name="Perrodou E."/>
            <person name="Carapito C."/>
            <person name="Deshayes C."/>
            <person name="Reyrat J.-M."/>
            <person name="Van Dorsselaer A."/>
            <person name="Poch O."/>
            <person name="Schaeffer C."/>
            <person name="Lecompte O."/>
        </authorList>
    </citation>
    <scope>NUCLEOTIDE SEQUENCE [LARGE SCALE GENOMIC DNA]</scope>
    <source>
        <strain>ATCC 700084 / mc(2)155</strain>
    </source>
</reference>
<dbReference type="EMBL" id="CP000480">
    <property type="protein sequence ID" value="ABK73503.1"/>
    <property type="molecule type" value="Genomic_DNA"/>
</dbReference>
<dbReference type="EMBL" id="CP001663">
    <property type="protein sequence ID" value="AFP41687.1"/>
    <property type="molecule type" value="Genomic_DNA"/>
</dbReference>
<dbReference type="RefSeq" id="WP_011730504.1">
    <property type="nucleotide sequence ID" value="NZ_SIJM01000061.1"/>
</dbReference>
<dbReference type="RefSeq" id="YP_889633.1">
    <property type="nucleotide sequence ID" value="NC_008596.1"/>
</dbReference>
<dbReference type="SMR" id="A0R395"/>
<dbReference type="STRING" id="246196.MSMEG_5392"/>
<dbReference type="PaxDb" id="246196-MSMEI_5244"/>
<dbReference type="GeneID" id="93460043"/>
<dbReference type="KEGG" id="msb:LJ00_26640"/>
<dbReference type="KEGG" id="msg:MSMEI_5244"/>
<dbReference type="KEGG" id="msm:MSMEG_5392"/>
<dbReference type="PATRIC" id="fig|246196.19.peg.5256"/>
<dbReference type="eggNOG" id="COG2060">
    <property type="taxonomic scope" value="Bacteria"/>
</dbReference>
<dbReference type="OrthoDB" id="9763796at2"/>
<dbReference type="Proteomes" id="UP000000757">
    <property type="component" value="Chromosome"/>
</dbReference>
<dbReference type="Proteomes" id="UP000006158">
    <property type="component" value="Chromosome"/>
</dbReference>
<dbReference type="GO" id="GO:0005886">
    <property type="term" value="C:plasma membrane"/>
    <property type="evidence" value="ECO:0007669"/>
    <property type="project" value="UniProtKB-SubCell"/>
</dbReference>
<dbReference type="GO" id="GO:0008556">
    <property type="term" value="F:P-type potassium transmembrane transporter activity"/>
    <property type="evidence" value="ECO:0007669"/>
    <property type="project" value="InterPro"/>
</dbReference>
<dbReference type="GO" id="GO:0030955">
    <property type="term" value="F:potassium ion binding"/>
    <property type="evidence" value="ECO:0007669"/>
    <property type="project" value="UniProtKB-UniRule"/>
</dbReference>
<dbReference type="HAMAP" id="MF_00275">
    <property type="entry name" value="KdpA"/>
    <property type="match status" value="1"/>
</dbReference>
<dbReference type="InterPro" id="IPR004623">
    <property type="entry name" value="KdpA"/>
</dbReference>
<dbReference type="NCBIfam" id="TIGR00680">
    <property type="entry name" value="kdpA"/>
    <property type="match status" value="1"/>
</dbReference>
<dbReference type="PANTHER" id="PTHR30607">
    <property type="entry name" value="POTASSIUM-TRANSPORTING ATPASE A CHAIN"/>
    <property type="match status" value="1"/>
</dbReference>
<dbReference type="PANTHER" id="PTHR30607:SF2">
    <property type="entry name" value="POTASSIUM-TRANSPORTING ATPASE POTASSIUM-BINDING SUBUNIT"/>
    <property type="match status" value="1"/>
</dbReference>
<dbReference type="Pfam" id="PF03814">
    <property type="entry name" value="KdpA"/>
    <property type="match status" value="1"/>
</dbReference>
<dbReference type="PIRSF" id="PIRSF001294">
    <property type="entry name" value="K_ATPaseA"/>
    <property type="match status" value="1"/>
</dbReference>
<comment type="function">
    <text evidence="1">Part of the high-affinity ATP-driven potassium transport (or Kdp) system, which catalyzes the hydrolysis of ATP coupled with the electrogenic transport of potassium into the cytoplasm. This subunit binds the extracellular potassium ions and delivers the ions to the membrane domain of KdpB through an intramembrane tunnel.</text>
</comment>
<comment type="subunit">
    <text evidence="1">The system is composed of three essential subunits: KdpA, KdpB and KdpC.</text>
</comment>
<comment type="subcellular location">
    <subcellularLocation>
        <location evidence="1">Cell membrane</location>
        <topology evidence="1">Multi-pass membrane protein</topology>
    </subcellularLocation>
</comment>
<comment type="similarity">
    <text evidence="1">Belongs to the KdpA family.</text>
</comment>
<proteinExistence type="inferred from homology"/>
<protein>
    <recommendedName>
        <fullName evidence="1">Potassium-transporting ATPase potassium-binding subunit</fullName>
    </recommendedName>
    <alternativeName>
        <fullName evidence="1">ATP phosphohydrolase [potassium-transporting] A chain</fullName>
    </alternativeName>
    <alternativeName>
        <fullName evidence="1">Potassium-binding and translocating subunit A</fullName>
    </alternativeName>
    <alternativeName>
        <fullName evidence="1">Potassium-translocating ATPase A chain</fullName>
    </alternativeName>
</protein>
<name>KDPA_MYCS2</name>
<feature type="chain" id="PRO_1000022233" description="Potassium-transporting ATPase potassium-binding subunit">
    <location>
        <begin position="1"/>
        <end position="556"/>
    </location>
</feature>
<feature type="transmembrane region" description="Helical" evidence="1">
    <location>
        <begin position="6"/>
        <end position="26"/>
    </location>
</feature>
<feature type="transmembrane region" description="Helical" evidence="1">
    <location>
        <begin position="65"/>
        <end position="85"/>
    </location>
</feature>
<feature type="transmembrane region" description="Helical" evidence="1">
    <location>
        <begin position="133"/>
        <end position="153"/>
    </location>
</feature>
<feature type="transmembrane region" description="Helical" evidence="1">
    <location>
        <begin position="176"/>
        <end position="196"/>
    </location>
</feature>
<feature type="transmembrane region" description="Helical" evidence="1">
    <location>
        <begin position="249"/>
        <end position="269"/>
    </location>
</feature>
<feature type="transmembrane region" description="Helical" evidence="1">
    <location>
        <begin position="283"/>
        <end position="303"/>
    </location>
</feature>
<feature type="transmembrane region" description="Helical" evidence="1">
    <location>
        <begin position="378"/>
        <end position="398"/>
    </location>
</feature>
<feature type="transmembrane region" description="Helical" evidence="1">
    <location>
        <begin position="415"/>
        <end position="435"/>
    </location>
</feature>
<feature type="transmembrane region" description="Helical" evidence="1">
    <location>
        <begin position="483"/>
        <end position="503"/>
    </location>
</feature>
<feature type="transmembrane region" description="Helical" evidence="1">
    <location>
        <begin position="526"/>
        <end position="546"/>
    </location>
</feature>
<accession>A0R395</accession>
<accession>I7G7I7</accession>
<sequence length="556" mass="58105">MSPTTAGIAFLASLVAAVVLVHVPLGDYMYRVYTSEKDSRAERLIYRVIGADPRAEQSWGSYARSVLAFSAVSIVFLFGLQLVQGRLPLHLHDPATPMTPALAWNTAVSFVTNTNWQAYAGESTQGHLVQMAGLAVQNFVSAAVGMAVAIALVRGFARRHTGELGNFWVDLVRGNLRILLPLAIVGALLLVAGGAIQNFALHEQVVTTLSGAAQTIPGGPVAGQEAIKELGTNGGGFFNVNSAHPFENPTPWTNWLENFLILLIPFSLPRTFGRMVGSARQGVAIAAIMGAIALASVSLTMLLQLQHHGTVPTAVGAAMEGVEQRFGVADSAVFAGSTTLTSTGAVNSFHDSYTSLGGLMTMFNMQLGEIGPGGVGSGLYGMLILAIITVFVAGLMVGRTPEYLGKKITPREIKLAASYFLATPLIVLTGSAIAMAMPGQRAGMLNTGPHGLSEVLYAFTSTANNNGSAFAGISVNTEWYNTALGLAMVFGRLLPIILVLALAGSLASQGVTPSSVGTLPTHRPQFVGMTVGVTLILVALTFLPILALGPLAEGIH</sequence>
<organism>
    <name type="scientific">Mycolicibacterium smegmatis (strain ATCC 700084 / mc(2)155)</name>
    <name type="common">Mycobacterium smegmatis</name>
    <dbReference type="NCBI Taxonomy" id="246196"/>
    <lineage>
        <taxon>Bacteria</taxon>
        <taxon>Bacillati</taxon>
        <taxon>Actinomycetota</taxon>
        <taxon>Actinomycetes</taxon>
        <taxon>Mycobacteriales</taxon>
        <taxon>Mycobacteriaceae</taxon>
        <taxon>Mycolicibacterium</taxon>
    </lineage>
</organism>